<proteinExistence type="evidence at protein level"/>
<keyword id="KW-0007">Acetylation</keyword>
<keyword id="KW-0175">Coiled coil</keyword>
<keyword id="KW-0963">Cytoplasm</keyword>
<keyword id="KW-0325">Glycoprotein</keyword>
<keyword id="KW-0403">Intermediate filament</keyword>
<keyword id="KW-1017">Isopeptide bond</keyword>
<keyword id="KW-0416">Keratin</keyword>
<keyword id="KW-0488">Methylation</keyword>
<keyword id="KW-0539">Nucleus</keyword>
<keyword id="KW-0597">Phosphoprotein</keyword>
<keyword id="KW-1185">Reference proteome</keyword>
<keyword id="KW-0832">Ubl conjugation</keyword>
<protein>
    <recommendedName>
        <fullName>Keratin, type I cytoskeletal 18</fullName>
    </recommendedName>
    <alternativeName>
        <fullName>Cytokeratin endo B</fullName>
        <shortName>Keratin D</shortName>
    </alternativeName>
    <alternativeName>
        <fullName>Cytokeratin-18</fullName>
        <shortName>CK-18</shortName>
    </alternativeName>
    <alternativeName>
        <fullName>Keratin-18</fullName>
        <shortName>K18</shortName>
    </alternativeName>
</protein>
<organism>
    <name type="scientific">Mus musculus</name>
    <name type="common">Mouse</name>
    <dbReference type="NCBI Taxonomy" id="10090"/>
    <lineage>
        <taxon>Eukaryota</taxon>
        <taxon>Metazoa</taxon>
        <taxon>Chordata</taxon>
        <taxon>Craniata</taxon>
        <taxon>Vertebrata</taxon>
        <taxon>Euteleostomi</taxon>
        <taxon>Mammalia</taxon>
        <taxon>Eutheria</taxon>
        <taxon>Euarchontoglires</taxon>
        <taxon>Glires</taxon>
        <taxon>Rodentia</taxon>
        <taxon>Myomorpha</taxon>
        <taxon>Muroidea</taxon>
        <taxon>Muridae</taxon>
        <taxon>Murinae</taxon>
        <taxon>Mus</taxon>
        <taxon>Mus</taxon>
    </lineage>
</organism>
<feature type="initiator methionine" description="Removed" evidence="2">
    <location>
        <position position="1"/>
    </location>
</feature>
<feature type="chain" id="PRO_0000063667" description="Keratin, type I cytoskeletal 18">
    <location>
        <begin position="2"/>
        <end position="423"/>
    </location>
</feature>
<feature type="domain" description="IF rod" evidence="4">
    <location>
        <begin position="72"/>
        <end position="384"/>
    </location>
</feature>
<feature type="region of interest" description="Head">
    <location>
        <begin position="2"/>
        <end position="71"/>
    </location>
</feature>
<feature type="region of interest" description="Necessary for interaction with PNN" evidence="1">
    <location>
        <begin position="62"/>
        <end position="366"/>
    </location>
</feature>
<feature type="region of interest" description="Interaction with TRADD" evidence="1">
    <location>
        <begin position="69"/>
        <end position="121"/>
    </location>
</feature>
<feature type="region of interest" description="Coil 1A">
    <location>
        <begin position="72"/>
        <end position="107"/>
    </location>
</feature>
<feature type="region of interest" description="Linker 1">
    <location>
        <begin position="108"/>
        <end position="125"/>
    </location>
</feature>
<feature type="region of interest" description="Coil 1B">
    <location>
        <begin position="126"/>
        <end position="217"/>
    </location>
</feature>
<feature type="region of interest" description="Linker 12">
    <location>
        <begin position="218"/>
        <end position="241"/>
    </location>
</feature>
<feature type="region of interest" description="Interaction with DNAJB6" evidence="1">
    <location>
        <begin position="236"/>
        <end position="384"/>
    </location>
</feature>
<feature type="region of interest" description="Coil 2">
    <location>
        <begin position="242"/>
        <end position="380"/>
    </location>
</feature>
<feature type="region of interest" description="Tail">
    <location>
        <begin position="381"/>
        <end position="423"/>
    </location>
</feature>
<feature type="site" description="Cleavage; by caspase-3, caspase-6 or caspase-7">
    <location>
        <begin position="231"/>
        <end position="232"/>
    </location>
</feature>
<feature type="site" description="Stutter">
    <location>
        <position position="264"/>
    </location>
</feature>
<feature type="site" description="Stutter">
    <location>
        <position position="324"/>
    </location>
</feature>
<feature type="modified residue" description="N-acetylserine" evidence="2">
    <location>
        <position position="2"/>
    </location>
</feature>
<feature type="modified residue" description="Phosphoserine" evidence="2">
    <location>
        <position position="7"/>
    </location>
</feature>
<feature type="modified residue" description="Phosphoserine" evidence="2">
    <location>
        <position position="11"/>
    </location>
</feature>
<feature type="modified residue" description="Phosphoserine" evidence="2">
    <location>
        <position position="16"/>
    </location>
</feature>
<feature type="modified residue" description="Phosphoserine" evidence="2">
    <location>
        <position position="19"/>
    </location>
</feature>
<feature type="modified residue" description="Phosphoserine; alternate" evidence="16 17">
    <location>
        <position position="31"/>
    </location>
</feature>
<feature type="modified residue" description="Phosphoserine; alternate" evidence="16 17">
    <location>
        <position position="32"/>
    </location>
</feature>
<feature type="modified residue" description="Phosphoserine" evidence="16 17">
    <location>
        <position position="35"/>
    </location>
</feature>
<feature type="modified residue" description="Phosphotyrosine" evidence="17">
    <location>
        <position position="37"/>
    </location>
</feature>
<feature type="modified residue" description="Phosphoserine" evidence="17">
    <location>
        <position position="43"/>
    </location>
</feature>
<feature type="modified residue" description="Omega-N-methylarginine" evidence="2">
    <location>
        <position position="46"/>
    </location>
</feature>
<feature type="modified residue" description="Phosphoserine; alternate" evidence="2">
    <location>
        <position position="50"/>
    </location>
</feature>
<feature type="modified residue" description="Phosphoserine; by MAPKAPK2 and MAPKAPK3" evidence="7">
    <location>
        <position position="52"/>
    </location>
</feature>
<feature type="modified residue" description="Phosphoserine" evidence="17">
    <location>
        <position position="57"/>
    </location>
</feature>
<feature type="modified residue" description="Phosphoserine" evidence="2">
    <location>
        <position position="60"/>
    </location>
</feature>
<feature type="modified residue" description="Phosphoserine" evidence="2">
    <location>
        <position position="85"/>
    </location>
</feature>
<feature type="modified residue" description="Phosphoserine" evidence="2">
    <location>
        <position position="92"/>
    </location>
</feature>
<feature type="modified residue" description="N6-acetyllysine" evidence="2">
    <location>
        <position position="124"/>
    </location>
</feature>
<feature type="modified residue" description="Phosphoserine" evidence="17">
    <location>
        <position position="137"/>
    </location>
</feature>
<feature type="modified residue" description="Phosphoserine" evidence="2">
    <location>
        <position position="170"/>
    </location>
</feature>
<feature type="modified residue" description="Phosphothreonine" evidence="2">
    <location>
        <position position="295"/>
    </location>
</feature>
<feature type="modified residue" description="Phosphoserine" evidence="16 17">
    <location>
        <position position="316"/>
    </location>
</feature>
<feature type="modified residue" description="Phosphoserine" evidence="17">
    <location>
        <position position="384"/>
    </location>
</feature>
<feature type="modified residue" description="Phosphoserine" evidence="17">
    <location>
        <position position="391"/>
    </location>
</feature>
<feature type="modified residue" description="Phosphoserine" evidence="2">
    <location>
        <position position="392"/>
    </location>
</feature>
<feature type="modified residue" description="Phosphoserine" evidence="2">
    <location>
        <position position="394"/>
    </location>
</feature>
<feature type="modified residue" description="Phosphothreonine" evidence="2">
    <location>
        <position position="397"/>
    </location>
</feature>
<feature type="glycosylation site" description="O-linked (GlcNAc) serine; alternate" evidence="1">
    <location>
        <position position="31"/>
    </location>
</feature>
<feature type="glycosylation site" description="O-linked (GlcNAc) serine; alternate" evidence="1">
    <location>
        <position position="32"/>
    </location>
</feature>
<feature type="glycosylation site" description="O-linked (GlcNAc) serine; alternate" evidence="1">
    <location>
        <position position="50"/>
    </location>
</feature>
<feature type="cross-link" description="Glycyl lysine isopeptide (Lys-Gly) (interchain with G-Cter in SUMO2)" evidence="2">
    <location>
        <position position="73"/>
    </location>
</feature>
<feature type="cross-link" description="Glycyl lysine isopeptide (Lys-Gly) (interchain with G-Cter in SUMO2)" evidence="2">
    <location>
        <position position="240"/>
    </location>
</feature>
<feature type="cross-link" description="Glycyl lysine isopeptide (Lys-Gly) (interchain with G-Cter in SUMO2)" evidence="2">
    <location>
        <position position="363"/>
    </location>
</feature>
<feature type="cross-link" description="Glycyl lysine isopeptide (Lys-Gly) (interchain with G-Cter in SUMO2)" evidence="2">
    <location>
        <position position="365"/>
    </location>
</feature>
<feature type="sequence conflict" description="In Ref. 1; AAA39390 and 2; AAA39373." evidence="15" ref="1 2">
    <original>F</original>
    <variation>L</variation>
    <location>
        <position position="134"/>
    </location>
</feature>
<feature type="sequence conflict" description="In Ref. 4; BAE26424/BAE39378." evidence="15" ref="4">
    <original>V</original>
    <variation>A</variation>
    <location>
        <position position="214"/>
    </location>
</feature>
<feature type="sequence conflict" description="In Ref. 2; AAA39373." evidence="15" ref="2">
    <original>D</original>
    <variation>N</variation>
    <location>
        <position position="244"/>
    </location>
</feature>
<feature type="sequence conflict" description="In Ref. 2; AAA39373." evidence="15" ref="2">
    <original>A</original>
    <variation>G</variation>
    <location>
        <position position="253"/>
    </location>
</feature>
<feature type="sequence conflict" description="In Ref. 4; BAE39725." evidence="15" ref="4">
    <original>E</original>
    <variation>G</variation>
    <location>
        <position position="300"/>
    </location>
</feature>
<reference key="1">
    <citation type="journal article" date="1986" name="J. Biol. Chem.">
        <title>Molecular cloning and characterization of the Endo B cytokeratin expressed in preimplantation mouse embryos.</title>
        <authorList>
            <person name="Singer P.A."/>
            <person name="Trevor K."/>
            <person name="Oshima R.G."/>
        </authorList>
    </citation>
    <scope>NUCLEOTIDE SEQUENCE [MRNA]</scope>
    <scope>TISSUE SPECIFICITY</scope>
    <scope>INDUCTION</scope>
    <source>
        <tissue>Endoderm</tissue>
    </source>
</reference>
<reference key="2">
    <citation type="journal article" date="1987" name="Roux's Arch. Dev. Biol.">
        <title>Cloning and characterization of keratin D, a murine endodermal cytoskeletal protein induced during in vitro differentiation of F9 teratocarcinoma cells.</title>
        <authorList>
            <person name="Alonso A."/>
            <person name="Weber T."/>
            <person name="Jorcano J.L."/>
        </authorList>
    </citation>
    <scope>NUCLEOTIDE SEQUENCE [MRNA]</scope>
    <source>
        <tissue>Teratocarcinoma</tissue>
    </source>
</reference>
<reference key="3">
    <citation type="journal article" date="1988" name="Gene">
        <title>Nucleotide sequence and structure of the mouse cytokeratin endoB gene.</title>
        <authorList>
            <person name="Ichinose Y."/>
            <person name="Morita T."/>
            <person name="Zhang F."/>
            <person name="Srimahasongcram S."/>
            <person name="Tondella M.L.C."/>
            <person name="Matsumoto M."/>
            <person name="Nozaki M."/>
            <person name="Matsushiro A."/>
        </authorList>
    </citation>
    <scope>NUCLEOTIDE SEQUENCE [GENOMIC DNA]</scope>
    <source>
        <strain>129/SvJ</strain>
        <tissue>Liver</tissue>
    </source>
</reference>
<reference key="4">
    <citation type="journal article" date="2005" name="Science">
        <title>The transcriptional landscape of the mammalian genome.</title>
        <authorList>
            <person name="Carninci P."/>
            <person name="Kasukawa T."/>
            <person name="Katayama S."/>
            <person name="Gough J."/>
            <person name="Frith M.C."/>
            <person name="Maeda N."/>
            <person name="Oyama R."/>
            <person name="Ravasi T."/>
            <person name="Lenhard B."/>
            <person name="Wells C."/>
            <person name="Kodzius R."/>
            <person name="Shimokawa K."/>
            <person name="Bajic V.B."/>
            <person name="Brenner S.E."/>
            <person name="Batalov S."/>
            <person name="Forrest A.R."/>
            <person name="Zavolan M."/>
            <person name="Davis M.J."/>
            <person name="Wilming L.G."/>
            <person name="Aidinis V."/>
            <person name="Allen J.E."/>
            <person name="Ambesi-Impiombato A."/>
            <person name="Apweiler R."/>
            <person name="Aturaliya R.N."/>
            <person name="Bailey T.L."/>
            <person name="Bansal M."/>
            <person name="Baxter L."/>
            <person name="Beisel K.W."/>
            <person name="Bersano T."/>
            <person name="Bono H."/>
            <person name="Chalk A.M."/>
            <person name="Chiu K.P."/>
            <person name="Choudhary V."/>
            <person name="Christoffels A."/>
            <person name="Clutterbuck D.R."/>
            <person name="Crowe M.L."/>
            <person name="Dalla E."/>
            <person name="Dalrymple B.P."/>
            <person name="de Bono B."/>
            <person name="Della Gatta G."/>
            <person name="di Bernardo D."/>
            <person name="Down T."/>
            <person name="Engstrom P."/>
            <person name="Fagiolini M."/>
            <person name="Faulkner G."/>
            <person name="Fletcher C.F."/>
            <person name="Fukushima T."/>
            <person name="Furuno M."/>
            <person name="Futaki S."/>
            <person name="Gariboldi M."/>
            <person name="Georgii-Hemming P."/>
            <person name="Gingeras T.R."/>
            <person name="Gojobori T."/>
            <person name="Green R.E."/>
            <person name="Gustincich S."/>
            <person name="Harbers M."/>
            <person name="Hayashi Y."/>
            <person name="Hensch T.K."/>
            <person name="Hirokawa N."/>
            <person name="Hill D."/>
            <person name="Huminiecki L."/>
            <person name="Iacono M."/>
            <person name="Ikeo K."/>
            <person name="Iwama A."/>
            <person name="Ishikawa T."/>
            <person name="Jakt M."/>
            <person name="Kanapin A."/>
            <person name="Katoh M."/>
            <person name="Kawasawa Y."/>
            <person name="Kelso J."/>
            <person name="Kitamura H."/>
            <person name="Kitano H."/>
            <person name="Kollias G."/>
            <person name="Krishnan S.P."/>
            <person name="Kruger A."/>
            <person name="Kummerfeld S.K."/>
            <person name="Kurochkin I.V."/>
            <person name="Lareau L.F."/>
            <person name="Lazarevic D."/>
            <person name="Lipovich L."/>
            <person name="Liu J."/>
            <person name="Liuni S."/>
            <person name="McWilliam S."/>
            <person name="Madan Babu M."/>
            <person name="Madera M."/>
            <person name="Marchionni L."/>
            <person name="Matsuda H."/>
            <person name="Matsuzawa S."/>
            <person name="Miki H."/>
            <person name="Mignone F."/>
            <person name="Miyake S."/>
            <person name="Morris K."/>
            <person name="Mottagui-Tabar S."/>
            <person name="Mulder N."/>
            <person name="Nakano N."/>
            <person name="Nakauchi H."/>
            <person name="Ng P."/>
            <person name="Nilsson R."/>
            <person name="Nishiguchi S."/>
            <person name="Nishikawa S."/>
            <person name="Nori F."/>
            <person name="Ohara O."/>
            <person name="Okazaki Y."/>
            <person name="Orlando V."/>
            <person name="Pang K.C."/>
            <person name="Pavan W.J."/>
            <person name="Pavesi G."/>
            <person name="Pesole G."/>
            <person name="Petrovsky N."/>
            <person name="Piazza S."/>
            <person name="Reed J."/>
            <person name="Reid J.F."/>
            <person name="Ring B.Z."/>
            <person name="Ringwald M."/>
            <person name="Rost B."/>
            <person name="Ruan Y."/>
            <person name="Salzberg S.L."/>
            <person name="Sandelin A."/>
            <person name="Schneider C."/>
            <person name="Schoenbach C."/>
            <person name="Sekiguchi K."/>
            <person name="Semple C.A."/>
            <person name="Seno S."/>
            <person name="Sessa L."/>
            <person name="Sheng Y."/>
            <person name="Shibata Y."/>
            <person name="Shimada H."/>
            <person name="Shimada K."/>
            <person name="Silva D."/>
            <person name="Sinclair B."/>
            <person name="Sperling S."/>
            <person name="Stupka E."/>
            <person name="Sugiura K."/>
            <person name="Sultana R."/>
            <person name="Takenaka Y."/>
            <person name="Taki K."/>
            <person name="Tammoja K."/>
            <person name="Tan S.L."/>
            <person name="Tang S."/>
            <person name="Taylor M.S."/>
            <person name="Tegner J."/>
            <person name="Teichmann S.A."/>
            <person name="Ueda H.R."/>
            <person name="van Nimwegen E."/>
            <person name="Verardo R."/>
            <person name="Wei C.L."/>
            <person name="Yagi K."/>
            <person name="Yamanishi H."/>
            <person name="Zabarovsky E."/>
            <person name="Zhu S."/>
            <person name="Zimmer A."/>
            <person name="Hide W."/>
            <person name="Bult C."/>
            <person name="Grimmond S.M."/>
            <person name="Teasdale R.D."/>
            <person name="Liu E.T."/>
            <person name="Brusic V."/>
            <person name="Quackenbush J."/>
            <person name="Wahlestedt C."/>
            <person name="Mattick J.S."/>
            <person name="Hume D.A."/>
            <person name="Kai C."/>
            <person name="Sasaki D."/>
            <person name="Tomaru Y."/>
            <person name="Fukuda S."/>
            <person name="Kanamori-Katayama M."/>
            <person name="Suzuki M."/>
            <person name="Aoki J."/>
            <person name="Arakawa T."/>
            <person name="Iida J."/>
            <person name="Imamura K."/>
            <person name="Itoh M."/>
            <person name="Kato T."/>
            <person name="Kawaji H."/>
            <person name="Kawagashira N."/>
            <person name="Kawashima T."/>
            <person name="Kojima M."/>
            <person name="Kondo S."/>
            <person name="Konno H."/>
            <person name="Nakano K."/>
            <person name="Ninomiya N."/>
            <person name="Nishio T."/>
            <person name="Okada M."/>
            <person name="Plessy C."/>
            <person name="Shibata K."/>
            <person name="Shiraki T."/>
            <person name="Suzuki S."/>
            <person name="Tagami M."/>
            <person name="Waki K."/>
            <person name="Watahiki A."/>
            <person name="Okamura-Oho Y."/>
            <person name="Suzuki H."/>
            <person name="Kawai J."/>
            <person name="Hayashizaki Y."/>
        </authorList>
    </citation>
    <scope>NUCLEOTIDE SEQUENCE [LARGE SCALE MRNA]</scope>
    <source>
        <strain>C57BL/6J</strain>
        <tissue>Blastocyst</tissue>
        <tissue>Embryo</tissue>
        <tissue>Placenta</tissue>
    </source>
</reference>
<reference key="5">
    <citation type="journal article" date="2004" name="Genome Res.">
        <title>The status, quality, and expansion of the NIH full-length cDNA project: the Mammalian Gene Collection (MGC).</title>
        <authorList>
            <consortium name="The MGC Project Team"/>
        </authorList>
    </citation>
    <scope>NUCLEOTIDE SEQUENCE [LARGE SCALE MRNA]</scope>
    <source>
        <strain>C57BL/6J</strain>
        <tissue>Eye</tissue>
    </source>
</reference>
<reference key="6">
    <citation type="journal article" date="1988" name="Genes Dev.">
        <title>Identification of the gene coding for the Endo B murine cytokeratin and its methylated, stable inactive state in mouse nonepithelial cells.</title>
        <authorList>
            <person name="Oshima R.G."/>
            <person name="Trevor K."/>
            <person name="Shevinsky L.H."/>
            <person name="Ryder O.A."/>
            <person name="Cecena G."/>
        </authorList>
    </citation>
    <scope>NUCLEOTIDE SEQUENCE [GENOMIC DNA] OF 1-132</scope>
    <scope>TISSUE SPECIFICITY</scope>
</reference>
<reference key="7">
    <citation type="journal article" date="1993" name="Dev. Biol.">
        <title>Embryonic expression of human keratin 18 and K18-beta-galactosidase fusion genes in transgenic mice.</title>
        <authorList>
            <person name="Thorey I.S."/>
            <person name="Meneses J.J."/>
            <person name="Neznanov N."/>
            <person name="Kulesh D.A."/>
            <person name="Pedersen R.A."/>
            <person name="Oshima R.G."/>
        </authorList>
    </citation>
    <scope>TISSUE SPECIFICITY</scope>
    <scope>DEVELOPMENTAL STAGE</scope>
</reference>
<reference key="8">
    <citation type="journal article" date="1993" name="J. Anat.">
        <title>Monoclonal antibodies recognising stage and region specific epitopes in embryonic mouse palatal epithelial cells.</title>
        <authorList>
            <person name="Dixon M.J."/>
            <person name="Robinson V."/>
            <person name="White A."/>
            <person name="Ferguson M.W."/>
        </authorList>
    </citation>
    <scope>DEVELOPMENTAL STAGE</scope>
</reference>
<reference key="9">
    <citation type="journal article" date="1997" name="J. Cell Biol.">
        <title>Caspase cleavage of keratin 18 and reorganization of intermediate filaments during epithelial cell apoptosis.</title>
        <authorList>
            <person name="Caulin C."/>
            <person name="Salvesen G.S."/>
            <person name="Oshima R.G."/>
        </authorList>
    </citation>
    <scope>CLEAVAGE BY CASPASES</scope>
</reference>
<reference key="10">
    <citation type="journal article" date="2006" name="Tissue Cell">
        <title>Superficial cell differentiation during embryonic and postnatal development of mouse urothelium.</title>
        <authorList>
            <person name="Erman A."/>
            <person name="Veranic P."/>
            <person name="Psenicnik M."/>
            <person name="Jezernik K."/>
        </authorList>
    </citation>
    <scope>DEVELOPMENTAL STAGE</scope>
</reference>
<reference key="11">
    <citation type="journal article" date="2007" name="J. Biol. Chem.">
        <title>Interleukin-6 induces keratin expression in intestinal epithelial cells: potential role of keratin-8 in interleukin-6-induced barrier function alterations.</title>
        <authorList>
            <person name="Wang L."/>
            <person name="Srinivasan S."/>
            <person name="Theiss A.L."/>
            <person name="Merlin D."/>
            <person name="Sitaraman S.V."/>
        </authorList>
    </citation>
    <scope>FUNCTION</scope>
    <scope>TISSUE SPECIFICITY</scope>
    <scope>PHOSPHORYLATION</scope>
    <scope>INDUCTION</scope>
</reference>
<reference key="12">
    <citation type="journal article" date="2007" name="Proc. Natl. Acad. Sci. U.S.A.">
        <title>Large-scale phosphorylation analysis of mouse liver.</title>
        <authorList>
            <person name="Villen J."/>
            <person name="Beausoleil S.A."/>
            <person name="Gerber S.A."/>
            <person name="Gygi S.P."/>
        </authorList>
    </citation>
    <scope>PHOSPHORYLATION [LARGE SCALE ANALYSIS] AT SER-31; SER-32; SER-35 AND SER-316</scope>
    <scope>IDENTIFICATION BY MASS SPECTROMETRY [LARGE SCALE ANALYSIS]</scope>
    <source>
        <tissue>Liver</tissue>
    </source>
</reference>
<reference key="13">
    <citation type="journal article" date="2010" name="Cell">
        <title>A tissue-specific atlas of mouse protein phosphorylation and expression.</title>
        <authorList>
            <person name="Huttlin E.L."/>
            <person name="Jedrychowski M.P."/>
            <person name="Elias J.E."/>
            <person name="Goswami T."/>
            <person name="Rad R."/>
            <person name="Beausoleil S.A."/>
            <person name="Villen J."/>
            <person name="Haas W."/>
            <person name="Sowa M.E."/>
            <person name="Gygi S.P."/>
        </authorList>
    </citation>
    <scope>PHOSPHORYLATION [LARGE SCALE ANALYSIS] AT SER-31; SER-32; SER-35; TYR-37; SER-43; SER-57; SER-137; SER-316; SER-384 AND SER-391</scope>
    <scope>IDENTIFICATION BY MASS SPECTROMETRY [LARGE SCALE ANALYSIS]</scope>
    <source>
        <tissue>Kidney</tissue>
        <tissue>Liver</tissue>
        <tissue>Lung</tissue>
        <tissue>Pancreas</tissue>
    </source>
</reference>
<reference key="14">
    <citation type="journal article" date="2010" name="J. Biol. Chem.">
        <title>p38 MAP kinase and MAPKAP kinases MK2/3 cooperatively phosphorylate epithelial keratins.</title>
        <authorList>
            <person name="Menon M.B."/>
            <person name="Schwermann J."/>
            <person name="Singh A.K."/>
            <person name="Franz-Wachtel M."/>
            <person name="Pabst O."/>
            <person name="Seidler U."/>
            <person name="Omary M.B."/>
            <person name="Kotlyarov A."/>
            <person name="Gaestel M."/>
        </authorList>
    </citation>
    <scope>PHOSPHORYLATION AT SER-52 BY MAPKAPK2 AND MAPKAPK3</scope>
</reference>
<reference key="15">
    <citation type="journal article" date="2014" name="J. Invest. Dermatol.">
        <title>Interaction of plectin with keratins 5 and 14: dependence on several plectin domains and keratin quaternary structure.</title>
        <authorList>
            <person name="Bouameur J.E."/>
            <person name="Favre B."/>
            <person name="Fontao L."/>
            <person name="Lingasamy P."/>
            <person name="Begre N."/>
            <person name="Borradori L."/>
        </authorList>
    </citation>
    <scope>IDENTIFICATION IN A COMPLEX WITH KRT8</scope>
    <scope>INTERACTION WITH KRT8 AND PLEC</scope>
</reference>
<reference key="16">
    <citation type="journal article" date="2015" name="J. Hepatol.">
        <title>Epiplakin attenuates experimental mouse liver injury by chaperoning keratin reorganization.</title>
        <authorList>
            <person name="Szabo S."/>
            <person name="Woegenstein K.L."/>
            <person name="Oesterreicher C.H."/>
            <person name="Guldiken N."/>
            <person name="Chen Y."/>
            <person name="Doler C."/>
            <person name="Wiche G."/>
            <person name="Boor P."/>
            <person name="Haybaeck J."/>
            <person name="Strnad P."/>
            <person name="Fuchs P."/>
        </authorList>
    </citation>
    <scope>INTERACTION WITH EPPK1</scope>
</reference>
<comment type="function">
    <text evidence="1 6">When phosphorylated, plays a role in filament reorganization. Involved in the delivery of mutated CFTR to the plasma membrane. Involved in the uptake of thrombin-antithrombin complexes by hepatic cells (By similarity). Together with KRT8, is involved in interleukin-6 (IL-6)-mediated barrier protection.</text>
</comment>
<comment type="subunit">
    <text evidence="1 2 10 11">Heterotetramer of two type I and two type II keratins. KRT18 associates with KRT8 (PubMed:24940650). Interacts with PLEC isoform 1C, when in a heterodimer with KRT8 (PubMed:24940650). Interacts with PNN and mutated CFTR. Interacts with YWHAE, YWHAH and YWHAZ only when phosphorylated. Interacts with the thrombin-antithrombin complex. Interacts with DNAJB6, TCHP and TRADD (By similarity). Interacts with FAM83H (By similarity). Interacts with EPPK1 (PubMed:25617501). Interacts with PKP1 and PKP2 (By similarity).</text>
</comment>
<comment type="subcellular location">
    <subcellularLocation>
        <location evidence="3">Nucleus matrix</location>
    </subcellularLocation>
    <subcellularLocation>
        <location evidence="2">Cytoplasm</location>
        <location evidence="2">Perinuclear region</location>
    </subcellularLocation>
    <subcellularLocation>
        <location evidence="2">Nucleus</location>
        <location evidence="2">Nucleolus</location>
    </subcellularLocation>
    <subcellularLocation>
        <location evidence="3">Cytoplasm</location>
    </subcellularLocation>
</comment>
<comment type="tissue specificity">
    <text evidence="6 8 9 12">Expressed in endoderm, intestinal epithelial cells and in most extraembryonic tissues.</text>
</comment>
<comment type="developmental stage">
    <text evidence="5 12 13">During embryogenesis, expressed in a complex spatial and temporal pattern in various embryonic epithelia. In 7.5 and 13.5 day old embryo, expressed in most endodermal epithelia, ectodermal and nascent mesodermal tissues. When the neural plate forms, expression begins in the cells of skin ectoderm, head process/notochord, periderm, whisker buds, choroid plexus and the epithelia of auditory duct and inner ear. High expression in the lining endodermal cells when the foregut and hindgut invaginations form. Expression in all three layers of the urothelium starts at day 15 in the embryo and is not visible after day 18. By day 11 and 12, the entire embryonic palatal epithelium shows expression as well as the nasal passages and the roof of the mouth; which disappears progresively from day 13 to 15.</text>
</comment>
<comment type="induction">
    <text evidence="6 8">By retinoic acid and IL-6.</text>
</comment>
<comment type="PTM">
    <text evidence="6 7">Phosphorylation increases by IL-6.</text>
</comment>
<comment type="PTM">
    <text evidence="14">Proteolytically cleaved by caspases during epithelial cell apoptosis. Cleavage occurs at Asp-231 by either caspase-3, caspas-6 or caspase-7.</text>
</comment>
<comment type="PTM">
    <text evidence="1">O-GlcNAcylation increases solubility, and decreases stability by inducing proteasomal degradation.</text>
</comment>
<comment type="miscellaneous">
    <text>There are two types of cytoskeletal and microfibrillar keratin: I (acidic; 40-55 kDa) and II (neutral to basic; 56-70 kDa).</text>
</comment>
<comment type="similarity">
    <text evidence="4">Belongs to the intermediate filament family.</text>
</comment>
<accession>P05784</accession>
<accession>Q3TIX1</accession>
<accession>Q3TJH6</accession>
<accession>Q3TJW7</accession>
<accession>Q61766</accession>
<dbReference type="EMBL" id="M11686">
    <property type="protein sequence ID" value="AAA39390.1"/>
    <property type="molecule type" value="mRNA"/>
</dbReference>
<dbReference type="EMBL" id="M36376">
    <property type="protein sequence ID" value="AAA39373.1"/>
    <property type="molecule type" value="mRNA"/>
</dbReference>
<dbReference type="EMBL" id="M22832">
    <property type="protein sequence ID" value="AAA37552.1"/>
    <property type="molecule type" value="Genomic_DNA"/>
</dbReference>
<dbReference type="EMBL" id="AK145413">
    <property type="protein sequence ID" value="BAE26424.1"/>
    <property type="molecule type" value="mRNA"/>
</dbReference>
<dbReference type="EMBL" id="AK167072">
    <property type="protein sequence ID" value="BAE39232.1"/>
    <property type="molecule type" value="mRNA"/>
</dbReference>
<dbReference type="EMBL" id="AK167265">
    <property type="protein sequence ID" value="BAE39378.1"/>
    <property type="molecule type" value="mRNA"/>
</dbReference>
<dbReference type="EMBL" id="AK167432">
    <property type="protein sequence ID" value="BAE39519.1"/>
    <property type="molecule type" value="mRNA"/>
</dbReference>
<dbReference type="EMBL" id="AK167469">
    <property type="protein sequence ID" value="BAE39553.1"/>
    <property type="molecule type" value="mRNA"/>
</dbReference>
<dbReference type="EMBL" id="AK167676">
    <property type="protein sequence ID" value="BAE39725.1"/>
    <property type="molecule type" value="mRNA"/>
</dbReference>
<dbReference type="EMBL" id="BC089022">
    <property type="protein sequence ID" value="AAH89022.1"/>
    <property type="molecule type" value="mRNA"/>
</dbReference>
<dbReference type="EMBL" id="Y00217">
    <property type="protein sequence ID" value="CAA68365.1"/>
    <property type="molecule type" value="Genomic_DNA"/>
</dbReference>
<dbReference type="CCDS" id="CCDS27869.1"/>
<dbReference type="PIR" id="I59463">
    <property type="entry name" value="I59463"/>
</dbReference>
<dbReference type="RefSeq" id="NP_034794.2">
    <property type="nucleotide sequence ID" value="NM_010664.2"/>
</dbReference>
<dbReference type="SMR" id="P05784"/>
<dbReference type="BioGRID" id="201023">
    <property type="interactions" value="10"/>
</dbReference>
<dbReference type="ComplexPortal" id="CPX-5868">
    <property type="entry name" value="Keratin-8 - Keratin-18 dimer complex"/>
</dbReference>
<dbReference type="FunCoup" id="P05784">
    <property type="interactions" value="162"/>
</dbReference>
<dbReference type="IntAct" id="P05784">
    <property type="interactions" value="2"/>
</dbReference>
<dbReference type="MINT" id="P05784"/>
<dbReference type="STRING" id="10090.ENSMUSP00000023803"/>
<dbReference type="GlyCosmos" id="P05784">
    <property type="glycosylation" value="3 sites, No reported glycans"/>
</dbReference>
<dbReference type="GlyGen" id="P05784">
    <property type="glycosylation" value="6 sites, 1 N-linked glycan (1 site), 1 O-linked glycan (3 sites)"/>
</dbReference>
<dbReference type="iPTMnet" id="P05784"/>
<dbReference type="PhosphoSitePlus" id="P05784"/>
<dbReference type="SwissPalm" id="P05784"/>
<dbReference type="jPOST" id="P05784"/>
<dbReference type="PaxDb" id="10090-ENSMUSP00000023803"/>
<dbReference type="PeptideAtlas" id="P05784"/>
<dbReference type="ProteomicsDB" id="269138"/>
<dbReference type="Antibodypedia" id="271">
    <property type="antibodies" value="3760 antibodies from 58 providers"/>
</dbReference>
<dbReference type="DNASU" id="16668"/>
<dbReference type="Ensembl" id="ENSMUST00000023803.8">
    <property type="protein sequence ID" value="ENSMUSP00000023803.7"/>
    <property type="gene ID" value="ENSMUSG00000023043.8"/>
</dbReference>
<dbReference type="GeneID" id="16668"/>
<dbReference type="KEGG" id="mmu:16668"/>
<dbReference type="UCSC" id="uc007xuj.2">
    <property type="organism name" value="mouse"/>
</dbReference>
<dbReference type="AGR" id="MGI:96692"/>
<dbReference type="CTD" id="3875"/>
<dbReference type="MGI" id="MGI:96692">
    <property type="gene designation" value="Krt18"/>
</dbReference>
<dbReference type="VEuPathDB" id="HostDB:ENSMUSG00000023043"/>
<dbReference type="eggNOG" id="ENOG502QUS8">
    <property type="taxonomic scope" value="Eukaryota"/>
</dbReference>
<dbReference type="GeneTree" id="ENSGT00940000153309"/>
<dbReference type="HOGENOM" id="CLU_012560_8_1_1"/>
<dbReference type="InParanoid" id="P05784"/>
<dbReference type="OMA" id="LEXIFAS"/>
<dbReference type="OrthoDB" id="2441647at2759"/>
<dbReference type="PhylomeDB" id="P05784"/>
<dbReference type="TreeFam" id="TF332742"/>
<dbReference type="Reactome" id="R-MMU-6805567">
    <property type="pathway name" value="Keratinization"/>
</dbReference>
<dbReference type="Reactome" id="R-MMU-6809371">
    <property type="pathway name" value="Formation of the cornified envelope"/>
</dbReference>
<dbReference type="BioGRID-ORCS" id="16668">
    <property type="hits" value="4 hits in 78 CRISPR screens"/>
</dbReference>
<dbReference type="ChiTaRS" id="Krt18">
    <property type="organism name" value="mouse"/>
</dbReference>
<dbReference type="PRO" id="PR:P05784"/>
<dbReference type="Proteomes" id="UP000000589">
    <property type="component" value="Chromosome 15"/>
</dbReference>
<dbReference type="RNAct" id="P05784">
    <property type="molecule type" value="protein"/>
</dbReference>
<dbReference type="Bgee" id="ENSMUSG00000023043">
    <property type="expression patterns" value="Expressed in urinary bladder urothelium and 228 other cell types or tissues"/>
</dbReference>
<dbReference type="GO" id="GO:0071944">
    <property type="term" value="C:cell periphery"/>
    <property type="evidence" value="ECO:0000314"/>
    <property type="project" value="MGI"/>
</dbReference>
<dbReference type="GO" id="GO:0034451">
    <property type="term" value="C:centriolar satellite"/>
    <property type="evidence" value="ECO:0007669"/>
    <property type="project" value="Ensembl"/>
</dbReference>
<dbReference type="GO" id="GO:0005829">
    <property type="term" value="C:cytosol"/>
    <property type="evidence" value="ECO:0007669"/>
    <property type="project" value="Ensembl"/>
</dbReference>
<dbReference type="GO" id="GO:0005882">
    <property type="term" value="C:intermediate filament"/>
    <property type="evidence" value="ECO:0000314"/>
    <property type="project" value="MGI"/>
</dbReference>
<dbReference type="GO" id="GO:0045095">
    <property type="term" value="C:keratin filament"/>
    <property type="evidence" value="ECO:0000314"/>
    <property type="project" value="MGI"/>
</dbReference>
<dbReference type="GO" id="GO:0016363">
    <property type="term" value="C:nuclear matrix"/>
    <property type="evidence" value="ECO:0007669"/>
    <property type="project" value="UniProtKB-SubCell"/>
</dbReference>
<dbReference type="GO" id="GO:0005730">
    <property type="term" value="C:nucleolus"/>
    <property type="evidence" value="ECO:0007669"/>
    <property type="project" value="UniProtKB-SubCell"/>
</dbReference>
<dbReference type="GO" id="GO:0048471">
    <property type="term" value="C:perinuclear region of cytoplasm"/>
    <property type="evidence" value="ECO:0007669"/>
    <property type="project" value="UniProtKB-SubCell"/>
</dbReference>
<dbReference type="GO" id="GO:0097110">
    <property type="term" value="F:scaffold protein binding"/>
    <property type="evidence" value="ECO:0007669"/>
    <property type="project" value="Ensembl"/>
</dbReference>
<dbReference type="GO" id="GO:0005198">
    <property type="term" value="F:structural molecule activity"/>
    <property type="evidence" value="ECO:0007669"/>
    <property type="project" value="InterPro"/>
</dbReference>
<dbReference type="GO" id="GO:0097191">
    <property type="term" value="P:extrinsic apoptotic signaling pathway"/>
    <property type="evidence" value="ECO:0000315"/>
    <property type="project" value="MGI"/>
</dbReference>
<dbReference type="GO" id="GO:0043001">
    <property type="term" value="P:Golgi to plasma membrane protein transport"/>
    <property type="evidence" value="ECO:0007669"/>
    <property type="project" value="Ensembl"/>
</dbReference>
<dbReference type="GO" id="GO:0097284">
    <property type="term" value="P:hepatocyte apoptotic process"/>
    <property type="evidence" value="ECO:0000315"/>
    <property type="project" value="MGI"/>
</dbReference>
<dbReference type="GO" id="GO:0045104">
    <property type="term" value="P:intermediate filament cytoskeleton organization"/>
    <property type="evidence" value="ECO:0007669"/>
    <property type="project" value="Ensembl"/>
</dbReference>
<dbReference type="GO" id="GO:0043066">
    <property type="term" value="P:negative regulation of apoptotic process"/>
    <property type="evidence" value="ECO:0007669"/>
    <property type="project" value="Ensembl"/>
</dbReference>
<dbReference type="GO" id="GO:0033209">
    <property type="term" value="P:tumor necrosis factor-mediated signaling pathway"/>
    <property type="evidence" value="ECO:0000316"/>
    <property type="project" value="MGI"/>
</dbReference>
<dbReference type="FunFam" id="1.20.5.1160:FF:000002">
    <property type="entry name" value="Type I keratin 10"/>
    <property type="match status" value="1"/>
</dbReference>
<dbReference type="FunFam" id="1.20.5.170:FF:000002">
    <property type="entry name" value="Type I keratin KA11"/>
    <property type="match status" value="1"/>
</dbReference>
<dbReference type="FunFam" id="1.20.5.500:FF:000001">
    <property type="entry name" value="Type II keratin 23"/>
    <property type="match status" value="1"/>
</dbReference>
<dbReference type="Gene3D" id="1.20.5.170">
    <property type="match status" value="1"/>
</dbReference>
<dbReference type="Gene3D" id="1.20.5.500">
    <property type="entry name" value="Single helix bin"/>
    <property type="match status" value="1"/>
</dbReference>
<dbReference type="Gene3D" id="1.20.5.1160">
    <property type="entry name" value="Vasodilator-stimulated phosphoprotein"/>
    <property type="match status" value="1"/>
</dbReference>
<dbReference type="InterPro" id="IPR018039">
    <property type="entry name" value="IF_conserved"/>
</dbReference>
<dbReference type="InterPro" id="IPR039008">
    <property type="entry name" value="IF_rod_dom"/>
</dbReference>
<dbReference type="InterPro" id="IPR002957">
    <property type="entry name" value="Keratin_I"/>
</dbReference>
<dbReference type="PANTHER" id="PTHR23239">
    <property type="entry name" value="INTERMEDIATE FILAMENT"/>
    <property type="match status" value="1"/>
</dbReference>
<dbReference type="PANTHER" id="PTHR23239:SF349">
    <property type="entry name" value="KERATIN, TYPE I CYTOSKELETAL 18"/>
    <property type="match status" value="1"/>
</dbReference>
<dbReference type="Pfam" id="PF00038">
    <property type="entry name" value="Filament"/>
    <property type="match status" value="1"/>
</dbReference>
<dbReference type="PRINTS" id="PR01248">
    <property type="entry name" value="TYPE1KERATIN"/>
</dbReference>
<dbReference type="SMART" id="SM01391">
    <property type="entry name" value="Filament"/>
    <property type="match status" value="1"/>
</dbReference>
<dbReference type="SUPFAM" id="SSF64593">
    <property type="entry name" value="Intermediate filament protein, coiled coil region"/>
    <property type="match status" value="2"/>
</dbReference>
<dbReference type="PROSITE" id="PS00226">
    <property type="entry name" value="IF_ROD_1"/>
    <property type="match status" value="1"/>
</dbReference>
<dbReference type="PROSITE" id="PS51842">
    <property type="entry name" value="IF_ROD_2"/>
    <property type="match status" value="1"/>
</dbReference>
<sequence length="423" mass="47538">MSFTTRSTTFSTNYRSLGSVRTPSQRVRPASSAASVYAGAGGSGSRISVSRSVWGGSVGSAGLAGMGGIQTEKETMQDLNDRLASYLDKVKSLETENRRLESKIREHLEKKGPQGVRDWGHYFKIIEDLRAQIFANSVDNARIVLQIDNARLAADDFRVKYETELAMRQSVESDIHGLRKVVDDTNITRLQLETEIEALKEELLFMKKNHEEEVQGLEAQIASSGLTVEVDAPKSQDLSKIMADIRAQYEALAQKNREELDKYWSQQIEESTTVVTTKSAEIRDAETTLTELRRTLQTLEIDLDSMKNQNINLENSLGDVEARYKAQMEQLNGVLLHLESELAQTRAEGQRQAQEYEALLNIKVKLEAEIATYRRLLEDGEDFSLNDALDSSNSMQTVQKTTTRKIVDGRVVSETNDTRVLRH</sequence>
<evidence type="ECO:0000250" key="1"/>
<evidence type="ECO:0000250" key="2">
    <source>
        <dbReference type="UniProtKB" id="P05783"/>
    </source>
</evidence>
<evidence type="ECO:0000250" key="3">
    <source>
        <dbReference type="UniProtKB" id="Q5BJY9"/>
    </source>
</evidence>
<evidence type="ECO:0000255" key="4">
    <source>
        <dbReference type="PROSITE-ProRule" id="PRU01188"/>
    </source>
</evidence>
<evidence type="ECO:0000269" key="5">
    <source>
    </source>
</evidence>
<evidence type="ECO:0000269" key="6">
    <source>
    </source>
</evidence>
<evidence type="ECO:0000269" key="7">
    <source>
    </source>
</evidence>
<evidence type="ECO:0000269" key="8">
    <source>
    </source>
</evidence>
<evidence type="ECO:0000269" key="9">
    <source>
    </source>
</evidence>
<evidence type="ECO:0000269" key="10">
    <source>
    </source>
</evidence>
<evidence type="ECO:0000269" key="11">
    <source>
    </source>
</evidence>
<evidence type="ECO:0000269" key="12">
    <source>
    </source>
</evidence>
<evidence type="ECO:0000269" key="13">
    <source>
    </source>
</evidence>
<evidence type="ECO:0000269" key="14">
    <source>
    </source>
</evidence>
<evidence type="ECO:0000305" key="15"/>
<evidence type="ECO:0007744" key="16">
    <source>
    </source>
</evidence>
<evidence type="ECO:0007744" key="17">
    <source>
    </source>
</evidence>
<name>K1C18_MOUSE</name>
<gene>
    <name type="primary">Krt18</name>
    <name type="synonym">Kerd</name>
    <name type="synonym">Krt1-18</name>
</gene>